<name>Y4064_BACC4</name>
<organism>
    <name type="scientific">Bacillus cereus (strain B4264)</name>
    <dbReference type="NCBI Taxonomy" id="405532"/>
    <lineage>
        <taxon>Bacteria</taxon>
        <taxon>Bacillati</taxon>
        <taxon>Bacillota</taxon>
        <taxon>Bacilli</taxon>
        <taxon>Bacillales</taxon>
        <taxon>Bacillaceae</taxon>
        <taxon>Bacillus</taxon>
        <taxon>Bacillus cereus group</taxon>
    </lineage>
</organism>
<accession>B7H6U8</accession>
<reference key="1">
    <citation type="submission" date="2008-10" db="EMBL/GenBank/DDBJ databases">
        <title>Genome sequence of Bacillus cereus B4264.</title>
        <authorList>
            <person name="Dodson R.J."/>
            <person name="Durkin A.S."/>
            <person name="Rosovitz M.J."/>
            <person name="Rasko D.A."/>
            <person name="Hoffmaster A."/>
            <person name="Ravel J."/>
            <person name="Sutton G."/>
        </authorList>
    </citation>
    <scope>NUCLEOTIDE SEQUENCE [LARGE SCALE GENOMIC DNA]</scope>
    <source>
        <strain>B4264</strain>
    </source>
</reference>
<feature type="chain" id="PRO_1000136025" description="UPF0223 protein BCB4264_A4064">
    <location>
        <begin position="1"/>
        <end position="89"/>
    </location>
</feature>
<evidence type="ECO:0000255" key="1">
    <source>
        <dbReference type="HAMAP-Rule" id="MF_01041"/>
    </source>
</evidence>
<protein>
    <recommendedName>
        <fullName evidence="1">UPF0223 protein BCB4264_A4064</fullName>
    </recommendedName>
</protein>
<gene>
    <name type="ordered locus">BCB4264_A4064</name>
</gene>
<comment type="similarity">
    <text evidence="1">Belongs to the UPF0223 family.</text>
</comment>
<proteinExistence type="inferred from homology"/>
<dbReference type="EMBL" id="CP001176">
    <property type="protein sequence ID" value="ACK63519.1"/>
    <property type="molecule type" value="Genomic_DNA"/>
</dbReference>
<dbReference type="RefSeq" id="WP_000456561.1">
    <property type="nucleotide sequence ID" value="NZ_VEHB01000002.1"/>
</dbReference>
<dbReference type="SMR" id="B7H6U8"/>
<dbReference type="KEGG" id="bcb:BCB4264_A4064"/>
<dbReference type="HOGENOM" id="CLU_166693_0_0_9"/>
<dbReference type="Proteomes" id="UP000007096">
    <property type="component" value="Chromosome"/>
</dbReference>
<dbReference type="Gene3D" id="1.10.220.80">
    <property type="entry name" value="BH2638-like"/>
    <property type="match status" value="1"/>
</dbReference>
<dbReference type="HAMAP" id="MF_01041">
    <property type="entry name" value="UPF0223"/>
    <property type="match status" value="1"/>
</dbReference>
<dbReference type="InterPro" id="IPR023324">
    <property type="entry name" value="BH2638-like_sf"/>
</dbReference>
<dbReference type="InterPro" id="IPR007920">
    <property type="entry name" value="UPF0223"/>
</dbReference>
<dbReference type="NCBIfam" id="NF003353">
    <property type="entry name" value="PRK04387.1"/>
    <property type="match status" value="1"/>
</dbReference>
<dbReference type="Pfam" id="PF05256">
    <property type="entry name" value="UPF0223"/>
    <property type="match status" value="1"/>
</dbReference>
<dbReference type="PIRSF" id="PIRSF037260">
    <property type="entry name" value="UPF0223"/>
    <property type="match status" value="1"/>
</dbReference>
<dbReference type="SUPFAM" id="SSF158504">
    <property type="entry name" value="BH2638-like"/>
    <property type="match status" value="1"/>
</dbReference>
<sequence>MEYQYPLDYDWSNEEMVTMVKFYEAIEKAYEKGIIREELMGLYRRFKEIVPSKAEEKKIDKEFQEVSGYSIYRAIQRAKEVEEQKLVKI</sequence>